<keyword id="KW-0067">ATP-binding</keyword>
<keyword id="KW-0963">Cytoplasm</keyword>
<keyword id="KW-0217">Developmental protein</keyword>
<keyword id="KW-0347">Helicase</keyword>
<keyword id="KW-0378">Hydrolase</keyword>
<keyword id="KW-0547">Nucleotide-binding</keyword>
<keyword id="KW-1185">Reference proteome</keyword>
<keyword id="KW-0943">RNA-mediated gene silencing</keyword>
<reference key="1">
    <citation type="journal article" date="2004" name="Cell">
        <title>The Drosophila SDE3 homolog armitage is required for oskar mRNA silencing and embryonic axis specification.</title>
        <authorList>
            <person name="Cook H.A."/>
            <person name="Koppetsch B.S."/>
            <person name="Wu J."/>
            <person name="Theurkauf W.E."/>
        </authorList>
    </citation>
    <scope>NUCLEOTIDE SEQUENCE [MRNA]</scope>
    <scope>FUNCTION</scope>
    <scope>SUBCELLULAR LOCATION</scope>
    <scope>TISSUE SPECIFICITY</scope>
    <source>
        <tissue>Ovary</tissue>
    </source>
</reference>
<reference key="2">
    <citation type="journal article" date="2000" name="Science">
        <title>The genome sequence of Drosophila melanogaster.</title>
        <authorList>
            <person name="Adams M.D."/>
            <person name="Celniker S.E."/>
            <person name="Holt R.A."/>
            <person name="Evans C.A."/>
            <person name="Gocayne J.D."/>
            <person name="Amanatides P.G."/>
            <person name="Scherer S.E."/>
            <person name="Li P.W."/>
            <person name="Hoskins R.A."/>
            <person name="Galle R.F."/>
            <person name="George R.A."/>
            <person name="Lewis S.E."/>
            <person name="Richards S."/>
            <person name="Ashburner M."/>
            <person name="Henderson S.N."/>
            <person name="Sutton G.G."/>
            <person name="Wortman J.R."/>
            <person name="Yandell M.D."/>
            <person name="Zhang Q."/>
            <person name="Chen L.X."/>
            <person name="Brandon R.C."/>
            <person name="Rogers Y.-H.C."/>
            <person name="Blazej R.G."/>
            <person name="Champe M."/>
            <person name="Pfeiffer B.D."/>
            <person name="Wan K.H."/>
            <person name="Doyle C."/>
            <person name="Baxter E.G."/>
            <person name="Helt G."/>
            <person name="Nelson C.R."/>
            <person name="Miklos G.L.G."/>
            <person name="Abril J.F."/>
            <person name="Agbayani A."/>
            <person name="An H.-J."/>
            <person name="Andrews-Pfannkoch C."/>
            <person name="Baldwin D."/>
            <person name="Ballew R.M."/>
            <person name="Basu A."/>
            <person name="Baxendale J."/>
            <person name="Bayraktaroglu L."/>
            <person name="Beasley E.M."/>
            <person name="Beeson K.Y."/>
            <person name="Benos P.V."/>
            <person name="Berman B.P."/>
            <person name="Bhandari D."/>
            <person name="Bolshakov S."/>
            <person name="Borkova D."/>
            <person name="Botchan M.R."/>
            <person name="Bouck J."/>
            <person name="Brokstein P."/>
            <person name="Brottier P."/>
            <person name="Burtis K.C."/>
            <person name="Busam D.A."/>
            <person name="Butler H."/>
            <person name="Cadieu E."/>
            <person name="Center A."/>
            <person name="Chandra I."/>
            <person name="Cherry J.M."/>
            <person name="Cawley S."/>
            <person name="Dahlke C."/>
            <person name="Davenport L.B."/>
            <person name="Davies P."/>
            <person name="de Pablos B."/>
            <person name="Delcher A."/>
            <person name="Deng Z."/>
            <person name="Mays A.D."/>
            <person name="Dew I."/>
            <person name="Dietz S.M."/>
            <person name="Dodson K."/>
            <person name="Doup L.E."/>
            <person name="Downes M."/>
            <person name="Dugan-Rocha S."/>
            <person name="Dunkov B.C."/>
            <person name="Dunn P."/>
            <person name="Durbin K.J."/>
            <person name="Evangelista C.C."/>
            <person name="Ferraz C."/>
            <person name="Ferriera S."/>
            <person name="Fleischmann W."/>
            <person name="Fosler C."/>
            <person name="Gabrielian A.E."/>
            <person name="Garg N.S."/>
            <person name="Gelbart W.M."/>
            <person name="Glasser K."/>
            <person name="Glodek A."/>
            <person name="Gong F."/>
            <person name="Gorrell J.H."/>
            <person name="Gu Z."/>
            <person name="Guan P."/>
            <person name="Harris M."/>
            <person name="Harris N.L."/>
            <person name="Harvey D.A."/>
            <person name="Heiman T.J."/>
            <person name="Hernandez J.R."/>
            <person name="Houck J."/>
            <person name="Hostin D."/>
            <person name="Houston K.A."/>
            <person name="Howland T.J."/>
            <person name="Wei M.-H."/>
            <person name="Ibegwam C."/>
            <person name="Jalali M."/>
            <person name="Kalush F."/>
            <person name="Karpen G.H."/>
            <person name="Ke Z."/>
            <person name="Kennison J.A."/>
            <person name="Ketchum K.A."/>
            <person name="Kimmel B.E."/>
            <person name="Kodira C.D."/>
            <person name="Kraft C.L."/>
            <person name="Kravitz S."/>
            <person name="Kulp D."/>
            <person name="Lai Z."/>
            <person name="Lasko P."/>
            <person name="Lei Y."/>
            <person name="Levitsky A.A."/>
            <person name="Li J.H."/>
            <person name="Li Z."/>
            <person name="Liang Y."/>
            <person name="Lin X."/>
            <person name="Liu X."/>
            <person name="Mattei B."/>
            <person name="McIntosh T.C."/>
            <person name="McLeod M.P."/>
            <person name="McPherson D."/>
            <person name="Merkulov G."/>
            <person name="Milshina N.V."/>
            <person name="Mobarry C."/>
            <person name="Morris J."/>
            <person name="Moshrefi A."/>
            <person name="Mount S.M."/>
            <person name="Moy M."/>
            <person name="Murphy B."/>
            <person name="Murphy L."/>
            <person name="Muzny D.M."/>
            <person name="Nelson D.L."/>
            <person name="Nelson D.R."/>
            <person name="Nelson K.A."/>
            <person name="Nixon K."/>
            <person name="Nusskern D.R."/>
            <person name="Pacleb J.M."/>
            <person name="Palazzolo M."/>
            <person name="Pittman G.S."/>
            <person name="Pan S."/>
            <person name="Pollard J."/>
            <person name="Puri V."/>
            <person name="Reese M.G."/>
            <person name="Reinert K."/>
            <person name="Remington K."/>
            <person name="Saunders R.D.C."/>
            <person name="Scheeler F."/>
            <person name="Shen H."/>
            <person name="Shue B.C."/>
            <person name="Siden-Kiamos I."/>
            <person name="Simpson M."/>
            <person name="Skupski M.P."/>
            <person name="Smith T.J."/>
            <person name="Spier E."/>
            <person name="Spradling A.C."/>
            <person name="Stapleton M."/>
            <person name="Strong R."/>
            <person name="Sun E."/>
            <person name="Svirskas R."/>
            <person name="Tector C."/>
            <person name="Turner R."/>
            <person name="Venter E."/>
            <person name="Wang A.H."/>
            <person name="Wang X."/>
            <person name="Wang Z.-Y."/>
            <person name="Wassarman D.A."/>
            <person name="Weinstock G.M."/>
            <person name="Weissenbach J."/>
            <person name="Williams S.M."/>
            <person name="Woodage T."/>
            <person name="Worley K.C."/>
            <person name="Wu D."/>
            <person name="Yang S."/>
            <person name="Yao Q.A."/>
            <person name="Ye J."/>
            <person name="Yeh R.-F."/>
            <person name="Zaveri J.S."/>
            <person name="Zhan M."/>
            <person name="Zhang G."/>
            <person name="Zhao Q."/>
            <person name="Zheng L."/>
            <person name="Zheng X.H."/>
            <person name="Zhong F.N."/>
            <person name="Zhong W."/>
            <person name="Zhou X."/>
            <person name="Zhu S.C."/>
            <person name="Zhu X."/>
            <person name="Smith H.O."/>
            <person name="Gibbs R.A."/>
            <person name="Myers E.W."/>
            <person name="Rubin G.M."/>
            <person name="Venter J.C."/>
        </authorList>
    </citation>
    <scope>NUCLEOTIDE SEQUENCE [LARGE SCALE GENOMIC DNA]</scope>
    <source>
        <strain>Berkeley</strain>
    </source>
</reference>
<reference key="3">
    <citation type="journal article" date="2002" name="Genome Biol.">
        <title>Annotation of the Drosophila melanogaster euchromatic genome: a systematic review.</title>
        <authorList>
            <person name="Misra S."/>
            <person name="Crosby M.A."/>
            <person name="Mungall C.J."/>
            <person name="Matthews B.B."/>
            <person name="Campbell K.S."/>
            <person name="Hradecky P."/>
            <person name="Huang Y."/>
            <person name="Kaminker J.S."/>
            <person name="Millburn G.H."/>
            <person name="Prochnik S.E."/>
            <person name="Smith C.D."/>
            <person name="Tupy J.L."/>
            <person name="Whitfield E.J."/>
            <person name="Bayraktaroglu L."/>
            <person name="Berman B.P."/>
            <person name="Bettencourt B.R."/>
            <person name="Celniker S.E."/>
            <person name="de Grey A.D.N.J."/>
            <person name="Drysdale R.A."/>
            <person name="Harris N.L."/>
            <person name="Richter J."/>
            <person name="Russo S."/>
            <person name="Schroeder A.J."/>
            <person name="Shu S.Q."/>
            <person name="Stapleton M."/>
            <person name="Yamada C."/>
            <person name="Ashburner M."/>
            <person name="Gelbart W.M."/>
            <person name="Rubin G.M."/>
            <person name="Lewis S.E."/>
        </authorList>
    </citation>
    <scope>GENOME REANNOTATION</scope>
    <source>
        <strain>Berkeley</strain>
    </source>
</reference>
<reference key="4">
    <citation type="journal article" date="2004" name="Cell">
        <title>RISC assembly defects in the Drosophila RNAi mutant armitage.</title>
        <authorList>
            <person name="Tomari Y."/>
            <person name="Du T."/>
            <person name="Haley B."/>
            <person name="Schwarz D.S."/>
            <person name="Bennett R."/>
            <person name="Cook H.A."/>
            <person name="Koppetsch B.S."/>
            <person name="Theurkauf W.E."/>
            <person name="Zamore P.D."/>
        </authorList>
    </citation>
    <scope>FUNCTION</scope>
</reference>
<reference key="5">
    <citation type="journal article" date="2007" name="Proc. Natl. Acad. Sci. U.S.A.">
        <title>Unique germ-line organelle, nuage, functions to repress selfish genetic elements in Drosophila melanogaster.</title>
        <authorList>
            <person name="Lim A.K."/>
            <person name="Kai T."/>
        </authorList>
    </citation>
    <scope>FUNCTION</scope>
</reference>
<reference key="6">
    <citation type="journal article" date="2007" name="Proc. Natl. Acad. Sci. U.S.A.">
        <authorList>
            <person name="Lim A.K."/>
            <person name="Kai T."/>
        </authorList>
    </citation>
    <scope>ERRATUM OF PUBMED:17428915</scope>
</reference>
<reference key="7">
    <citation type="journal article" date="2010" name="Genes Dev.">
        <title>Roles for the Yb body components Armitage and Yb in primary piRNA biogenesis in Drosophila.</title>
        <authorList>
            <person name="Saito K."/>
            <person name="Ishizu H."/>
            <person name="Komai M."/>
            <person name="Kotani H."/>
            <person name="Kawamura Y."/>
            <person name="Nishida K.M."/>
            <person name="Siomi H."/>
            <person name="Siomi M.C."/>
        </authorList>
    </citation>
    <scope>FUNCTION</scope>
    <scope>INTERACTION WITH PIWI AND FS(Y)YB</scope>
    <scope>SUBCELLULAR LOCATION</scope>
</reference>
<name>ARMI_DROME</name>
<accession>Q6J5K9</accession>
<accession>Q59E56</accession>
<accession>Q9VZP4</accession>
<proteinExistence type="evidence at protein level"/>
<gene>
    <name evidence="7" type="primary">armi</name>
    <name evidence="7" type="ORF">CG11513</name>
</gene>
<dbReference type="EC" id="3.6.4.13"/>
<dbReference type="EMBL" id="AY598469">
    <property type="protein sequence ID" value="AAT12000.1"/>
    <property type="molecule type" value="mRNA"/>
</dbReference>
<dbReference type="EMBL" id="AE014296">
    <property type="protein sequence ID" value="AAF47775.2"/>
    <property type="molecule type" value="Genomic_DNA"/>
</dbReference>
<dbReference type="EMBL" id="AE014296">
    <property type="protein sequence ID" value="AAX52729.1"/>
    <property type="molecule type" value="Genomic_DNA"/>
</dbReference>
<dbReference type="RefSeq" id="NP_001014556.1">
    <property type="nucleotide sequence ID" value="NM_001014556.4"/>
</dbReference>
<dbReference type="RefSeq" id="NP_647816.2">
    <property type="nucleotide sequence ID" value="NM_139559.4"/>
</dbReference>
<dbReference type="SMR" id="Q6J5K9"/>
<dbReference type="BioGRID" id="63920">
    <property type="interactions" value="18"/>
</dbReference>
<dbReference type="FunCoup" id="Q6J5K9">
    <property type="interactions" value="234"/>
</dbReference>
<dbReference type="IntAct" id="Q6J5K9">
    <property type="interactions" value="7"/>
</dbReference>
<dbReference type="MINT" id="Q6J5K9"/>
<dbReference type="STRING" id="7227.FBpp0301575"/>
<dbReference type="PaxDb" id="7227-FBpp0100102"/>
<dbReference type="EnsemblMetazoa" id="FBtr0100641">
    <property type="protein sequence ID" value="FBpp0100102"/>
    <property type="gene ID" value="FBgn0041164"/>
</dbReference>
<dbReference type="EnsemblMetazoa" id="FBtr0309841">
    <property type="protein sequence ID" value="FBpp0301575"/>
    <property type="gene ID" value="FBgn0041164"/>
</dbReference>
<dbReference type="GeneID" id="38427"/>
<dbReference type="KEGG" id="dme:Dmel_CG11513"/>
<dbReference type="UCSC" id="CG11513-RA">
    <property type="organism name" value="d. melanogaster"/>
</dbReference>
<dbReference type="AGR" id="FB:FBgn0041164"/>
<dbReference type="CTD" id="38427"/>
<dbReference type="FlyBase" id="FBgn0041164">
    <property type="gene designation" value="armi"/>
</dbReference>
<dbReference type="VEuPathDB" id="VectorBase:FBgn0041164"/>
<dbReference type="eggNOG" id="KOG1804">
    <property type="taxonomic scope" value="Eukaryota"/>
</dbReference>
<dbReference type="GeneTree" id="ENSGT00940000165903"/>
<dbReference type="InParanoid" id="Q6J5K9"/>
<dbReference type="OMA" id="VDDCWRH"/>
<dbReference type="OrthoDB" id="6513042at2759"/>
<dbReference type="PhylomeDB" id="Q6J5K9"/>
<dbReference type="BioGRID-ORCS" id="38427">
    <property type="hits" value="0 hits in 3 CRISPR screens"/>
</dbReference>
<dbReference type="CD-CODE" id="DB0924F8">
    <property type="entry name" value="Yb-body"/>
</dbReference>
<dbReference type="GenomeRNAi" id="38427"/>
<dbReference type="PRO" id="PR:Q6J5K9"/>
<dbReference type="Proteomes" id="UP000000803">
    <property type="component" value="Chromosome 3L"/>
</dbReference>
<dbReference type="Bgee" id="FBgn0041164">
    <property type="expression patterns" value="Expressed in polar follicle cell (Drosophila) in ovary and 53 other cell types or tissues"/>
</dbReference>
<dbReference type="ExpressionAtlas" id="Q6J5K9">
    <property type="expression patterns" value="differential"/>
</dbReference>
<dbReference type="GO" id="GO:0030424">
    <property type="term" value="C:axon"/>
    <property type="evidence" value="ECO:0000314"/>
    <property type="project" value="FlyBase"/>
</dbReference>
<dbReference type="GO" id="GO:0005737">
    <property type="term" value="C:cytoplasm"/>
    <property type="evidence" value="ECO:0000314"/>
    <property type="project" value="UniProtKB"/>
</dbReference>
<dbReference type="GO" id="GO:0032473">
    <property type="term" value="C:cytoplasmic side of mitochondrial outer membrane"/>
    <property type="evidence" value="ECO:0000314"/>
    <property type="project" value="FlyBase"/>
</dbReference>
<dbReference type="GO" id="GO:0005829">
    <property type="term" value="C:cytosol"/>
    <property type="evidence" value="ECO:0000314"/>
    <property type="project" value="FlyBase"/>
</dbReference>
<dbReference type="GO" id="GO:0030425">
    <property type="term" value="C:dendrite"/>
    <property type="evidence" value="ECO:0000314"/>
    <property type="project" value="FlyBase"/>
</dbReference>
<dbReference type="GO" id="GO:0031315">
    <property type="term" value="C:extrinsic component of mitochondrial outer membrane"/>
    <property type="evidence" value="ECO:0000314"/>
    <property type="project" value="FlyBase"/>
</dbReference>
<dbReference type="GO" id="GO:0043025">
    <property type="term" value="C:neuronal cell body"/>
    <property type="evidence" value="ECO:0000314"/>
    <property type="project" value="FlyBase"/>
</dbReference>
<dbReference type="GO" id="GO:0043186">
    <property type="term" value="C:P granule"/>
    <property type="evidence" value="ECO:0000314"/>
    <property type="project" value="FlyBase"/>
</dbReference>
<dbReference type="GO" id="GO:0070725">
    <property type="term" value="C:Yb body"/>
    <property type="evidence" value="ECO:0000314"/>
    <property type="project" value="FlyBase"/>
</dbReference>
<dbReference type="GO" id="GO:0032574">
    <property type="term" value="F:5'-3' RNA helicase activity"/>
    <property type="evidence" value="ECO:0000314"/>
    <property type="project" value="FlyBase"/>
</dbReference>
<dbReference type="GO" id="GO:0005524">
    <property type="term" value="F:ATP binding"/>
    <property type="evidence" value="ECO:0007669"/>
    <property type="project" value="UniProtKB-KW"/>
</dbReference>
<dbReference type="GO" id="GO:0016887">
    <property type="term" value="F:ATP hydrolysis activity"/>
    <property type="evidence" value="ECO:0000315"/>
    <property type="project" value="FlyBase"/>
</dbReference>
<dbReference type="GO" id="GO:0034584">
    <property type="term" value="F:piRNA binding"/>
    <property type="evidence" value="ECO:0000314"/>
    <property type="project" value="FlyBase"/>
</dbReference>
<dbReference type="GO" id="GO:0003723">
    <property type="term" value="F:RNA binding"/>
    <property type="evidence" value="ECO:0000318"/>
    <property type="project" value="GO_Central"/>
</dbReference>
<dbReference type="GO" id="GO:0003724">
    <property type="term" value="F:RNA helicase activity"/>
    <property type="evidence" value="ECO:0000303"/>
    <property type="project" value="UniProtKB"/>
</dbReference>
<dbReference type="GO" id="GO:0046843">
    <property type="term" value="P:dorsal appendage formation"/>
    <property type="evidence" value="ECO:0000315"/>
    <property type="project" value="FlyBase"/>
</dbReference>
<dbReference type="GO" id="GO:0000578">
    <property type="term" value="P:embryonic axis specification"/>
    <property type="evidence" value="ECO:0000315"/>
    <property type="project" value="UniProtKB"/>
</dbReference>
<dbReference type="GO" id="GO:0007293">
    <property type="term" value="P:germarium-derived egg chamber formation"/>
    <property type="evidence" value="ECO:0000315"/>
    <property type="project" value="FlyBase"/>
</dbReference>
<dbReference type="GO" id="GO:0007616">
    <property type="term" value="P:long-term memory"/>
    <property type="evidence" value="ECO:0000315"/>
    <property type="project" value="FlyBase"/>
</dbReference>
<dbReference type="GO" id="GO:0031023">
    <property type="term" value="P:microtubule organizing center organization"/>
    <property type="evidence" value="ECO:0000315"/>
    <property type="project" value="FlyBase"/>
</dbReference>
<dbReference type="GO" id="GO:2000002">
    <property type="term" value="P:negative regulation of DNA damage checkpoint"/>
    <property type="evidence" value="ECO:0000316"/>
    <property type="project" value="FlyBase"/>
</dbReference>
<dbReference type="GO" id="GO:0000184">
    <property type="term" value="P:nuclear-transcribed mRNA catabolic process, nonsense-mediated decay"/>
    <property type="evidence" value="ECO:0000315"/>
    <property type="project" value="UniProtKB"/>
</dbReference>
<dbReference type="GO" id="GO:0048477">
    <property type="term" value="P:oogenesis"/>
    <property type="evidence" value="ECO:0000315"/>
    <property type="project" value="FlyBase"/>
</dbReference>
<dbReference type="GO" id="GO:0007318">
    <property type="term" value="P:pole plasm protein localization"/>
    <property type="evidence" value="ECO:0000315"/>
    <property type="project" value="FlyBase"/>
</dbReference>
<dbReference type="GO" id="GO:0140990">
    <property type="term" value="P:primary piRNA processing"/>
    <property type="evidence" value="ECO:0000315"/>
    <property type="project" value="FlyBase"/>
</dbReference>
<dbReference type="GO" id="GO:0035194">
    <property type="term" value="P:regulatory ncRNA-mediated post-transcriptional gene silencing"/>
    <property type="evidence" value="ECO:0000315"/>
    <property type="project" value="UniProtKB"/>
</dbReference>
<dbReference type="GO" id="GO:0070922">
    <property type="term" value="P:RISC complex assembly"/>
    <property type="evidence" value="ECO:0000315"/>
    <property type="project" value="UniProtKB"/>
</dbReference>
<dbReference type="GO" id="GO:0140965">
    <property type="term" value="P:secondary piRNA processing"/>
    <property type="evidence" value="ECO:0000315"/>
    <property type="project" value="FlyBase"/>
</dbReference>
<dbReference type="CDD" id="cd18078">
    <property type="entry name" value="DEXXQc_Mov10L1"/>
    <property type="match status" value="1"/>
</dbReference>
<dbReference type="CDD" id="cd18808">
    <property type="entry name" value="SF1_C_Upf1"/>
    <property type="match status" value="1"/>
</dbReference>
<dbReference type="FunFam" id="3.40.50.300:FF:003414">
    <property type="entry name" value="Armitage, isoform C"/>
    <property type="match status" value="1"/>
</dbReference>
<dbReference type="Gene3D" id="2.40.30.270">
    <property type="match status" value="1"/>
</dbReference>
<dbReference type="Gene3D" id="3.40.50.300">
    <property type="entry name" value="P-loop containing nucleotide triphosphate hydrolases"/>
    <property type="match status" value="3"/>
</dbReference>
<dbReference type="InterPro" id="IPR041679">
    <property type="entry name" value="DNA2/NAM7-like_C"/>
</dbReference>
<dbReference type="InterPro" id="IPR041677">
    <property type="entry name" value="DNA2/NAM7_AAA_11"/>
</dbReference>
<dbReference type="InterPro" id="IPR049080">
    <property type="entry name" value="MOV-10-like_beta-barrel"/>
</dbReference>
<dbReference type="InterPro" id="IPR049079">
    <property type="entry name" value="Mov-10_helical"/>
</dbReference>
<dbReference type="InterPro" id="IPR027417">
    <property type="entry name" value="P-loop_NTPase"/>
</dbReference>
<dbReference type="InterPro" id="IPR047187">
    <property type="entry name" value="SF1_C_Upf1"/>
</dbReference>
<dbReference type="PANTHER" id="PTHR45418:SF5">
    <property type="entry name" value="BRCA2-INTERACTING PROTEIN-LIKE-RELATED"/>
    <property type="match status" value="1"/>
</dbReference>
<dbReference type="PANTHER" id="PTHR45418">
    <property type="entry name" value="CANCER/TESTIS ANTIGEN 55"/>
    <property type="match status" value="1"/>
</dbReference>
<dbReference type="Pfam" id="PF13086">
    <property type="entry name" value="AAA_11"/>
    <property type="match status" value="2"/>
</dbReference>
<dbReference type="Pfam" id="PF13087">
    <property type="entry name" value="AAA_12"/>
    <property type="match status" value="1"/>
</dbReference>
<dbReference type="Pfam" id="PF21634">
    <property type="entry name" value="MOV-10_beta-barrel"/>
    <property type="match status" value="1"/>
</dbReference>
<dbReference type="Pfam" id="PF21635">
    <property type="entry name" value="Mov-10_helical"/>
    <property type="match status" value="1"/>
</dbReference>
<dbReference type="SUPFAM" id="SSF52540">
    <property type="entry name" value="P-loop containing nucleoside triphosphate hydrolases"/>
    <property type="match status" value="1"/>
</dbReference>
<protein>
    <recommendedName>
        <fullName evidence="6">Probable RNA helicase armi</fullName>
        <ecNumber>3.6.4.13</ecNumber>
    </recommendedName>
    <alternativeName>
        <fullName evidence="7">Protein armitage</fullName>
    </alternativeName>
</protein>
<sequence length="1188" mass="135658">MFTYVSKFFTNPDRNREDILESLDRENSFLDQKLMEEKMDQQLKANPNEINGVLSNKIAELTHGLSEMDVSKESSCTARKGVITSLDGDRGVIDKDVLFETKVAEDIILDLHVGCVVEYLTFTTGEAMRVVKVKSILEHSWEDTSQKEIEKAVDNLKNEKPTFFNTETRSVLGLISQRLASSIDVETEYGQLTVELDNIEMNFIPTNGDRVRLECNIQLDDGFVDKQGEILEVTKLFPTRIQEGEKCIVERVYVHMVVLGPETYILKTDLPTGTDLHLGDIVLADLIECQYSKFTRRAIKITPLEKNFGATKLTQQSSMGSSGSGKAVTVTGVNRFITAELWQKESVSLKLTNNLNRTLRLESITVCNDSESQLSVVSPLESKEISSGSEITVTFEIHTQFLGEAIEKYVLNFDLLKVRRVFTVIVCKTKEEVAEAEKRMIAAEALMAPGRNSQERSRFYANQVWCNKVDVIPGQQIVTKRRFVALRLGCFEVPKELRQICLTSERRQEMIKAIEQHYSFLTEPLSIKTYMHRFRLLLHLEEIECFVNFRNYDRDRAHFLRDGEFLTLQIENLAERRPSLVIGDTLRVINPWSDPDSQTTKSYEGIIHKVLFDRILLKFHSSFQEKYNGEDYRLEFYFSRYSFRKQHHAISKIVGVMGEDFLFPSKVTKRENPQLDVYMKDDDMYLYDSKLEWYNQSLNSIQKRAVFNILRGEAENIPYVLFGPPGSGKTMTLIETLLQLVRNLPGARILVGTPSNSSADLVTKRLIDSKALLQGDFIRLVSYNQVEKDLIPPEIMSYCATSDVGAVGSCEDKMMVTESGLKLRCQAKFIGTHRITISTCTTLGNFLQLGFPAGHFTHVLFDEAGQCTEPETMVPIVMLTKKRSQVVLSGDPRQLQSIVTSRIASKMGFSISFLERLLERSPYRKDLQRFPESSGYNPLVLTKLLYNYRALPSIMSIYSRLFYDDELIPVLSEKDSRESRLLSKLRCVFESEKDIPQAHGTFFYGIIGENRQNNDSPSWFNPQEVREVFLMTIALYRANVTADQIGIITPYQKQVKMLRSMFIGTDVVMPKIGSVEEFQGQERDIILISTVRSSEEILRMDARFSLGFVRCSKRLNVAVSRARAMMIIFGNPHLLAVDECWRQLILFCVKNNAYFGCDLPQMVINQKDEVPVCLETFVPSLNTTDDLN</sequence>
<organism evidence="8">
    <name type="scientific">Drosophila melanogaster</name>
    <name type="common">Fruit fly</name>
    <dbReference type="NCBI Taxonomy" id="7227"/>
    <lineage>
        <taxon>Eukaryota</taxon>
        <taxon>Metazoa</taxon>
        <taxon>Ecdysozoa</taxon>
        <taxon>Arthropoda</taxon>
        <taxon>Hexapoda</taxon>
        <taxon>Insecta</taxon>
        <taxon>Pterygota</taxon>
        <taxon>Neoptera</taxon>
        <taxon>Endopterygota</taxon>
        <taxon>Diptera</taxon>
        <taxon>Brachycera</taxon>
        <taxon>Muscomorpha</taxon>
        <taxon>Ephydroidea</taxon>
        <taxon>Drosophilidae</taxon>
        <taxon>Drosophila</taxon>
        <taxon>Sophophora</taxon>
    </lineage>
</organism>
<evidence type="ECO:0000255" key="1"/>
<evidence type="ECO:0000269" key="2">
    <source>
    </source>
</evidence>
<evidence type="ECO:0000269" key="3">
    <source>
    </source>
</evidence>
<evidence type="ECO:0000269" key="4">
    <source>
    </source>
</evidence>
<evidence type="ECO:0000269" key="5">
    <source>
    </source>
</evidence>
<evidence type="ECO:0000305" key="6"/>
<evidence type="ECO:0000312" key="7">
    <source>
        <dbReference type="FlyBase" id="FBgn0041164"/>
    </source>
</evidence>
<evidence type="ECO:0000312" key="8">
    <source>
        <dbReference type="Proteomes" id="UP000000803"/>
    </source>
</evidence>
<comment type="function">
    <text evidence="2 3 4 5">Probable RNA helicase required for axial polarization of the oocyte during early and mid oogenesis (PubMed:15035984). Plays a central role in RNA interference (RNAi) process, a process that mediates mRNA destruction of translational repression (PubMed:15035984). Required for the assembly of the RISC complex, a complex required for target RNA destruction or repression (PubMed:15035985). May be required in the RISC assembly to unwind miRNAs, in the production of single-stranded miRNA from the double-stranded miRNA, a key step in RISC formation (PubMed:15035985). Required both for the translational control of oskar (osk) mRNA and cytoskeletal polarization in the oocyte (PubMed:15035984). Required for somatic primary piRNA biogenesis (PubMed:20966047). Involved in repression of long interspersed nuclear elements (LINEs) including HeT-A, I-element and TART LINEs (PubMed:17428915).</text>
</comment>
<comment type="catalytic activity">
    <reaction>
        <text>ATP + H2O = ADP + phosphate + H(+)</text>
        <dbReference type="Rhea" id="RHEA:13065"/>
        <dbReference type="ChEBI" id="CHEBI:15377"/>
        <dbReference type="ChEBI" id="CHEBI:15378"/>
        <dbReference type="ChEBI" id="CHEBI:30616"/>
        <dbReference type="ChEBI" id="CHEBI:43474"/>
        <dbReference type="ChEBI" id="CHEBI:456216"/>
        <dbReference type="EC" id="3.6.4.13"/>
    </reaction>
</comment>
<comment type="subunit">
    <text>Forms a complex with piwi and fs(1)Yb; this interaction is required for proper piRNA loading and nuclear localization of piwi. The interaction of piwi and fs(1)Yb is likely to occur via armi.</text>
</comment>
<comment type="interaction">
    <interactant intactId="EBI-2890374">
        <id>Q6J5K9</id>
    </interactant>
    <interactant intactId="EBI-3424083">
        <id>Q9W4W2</id>
        <label>fs(1)Yb</label>
    </interactant>
    <organismsDiffer>false</organismsDiffer>
    <experiments>4</experiments>
</comment>
<comment type="interaction">
    <interactant intactId="EBI-2890374">
        <id>Q6J5K9</id>
    </interactant>
    <interactant intactId="EBI-3406276">
        <id>Q9VKM1</id>
        <label>piwi</label>
    </interactant>
    <organismsDiffer>false</organismsDiffer>
    <experiments>4</experiments>
</comment>
<comment type="subcellular location">
    <subcellularLocation>
        <location evidence="2 5">Cytoplasm</location>
    </subcellularLocation>
    <text>Component of Yb bodies, an electron dense structure containing Yb protein found in somatic cells of ovary and testis.</text>
</comment>
<comment type="tissue specificity">
    <text evidence="2">Abundant in oocytes and syncytial blastoderm. Expressed at low level throughout development, including somatic tissues. First apparent early in oogenesis, in the cytoplasm of stem cells and mitotically dividing cystoblasts. In regions 2a and 2b of the germarium, it is most concentrated in the center of the germline cysts, where the pro-oocyte is located. In stage 1 and early stage 2 egg chambers, it accumulates at the anterior of the oocyte, near the ring canals. It also extends through the ring canals forming a branched structure that links the early oocyte with adjacent nurse cells. In stage 3 cysts, it accumulates at the posterior cortex and localizes to extensions that pass through the oocyte into the nurse cells. Through stages 4 to 7, it continues to be somewhat enriched at the posterior cortex of the oocyte, but at significantly lower level. In stage 9 to 10 egg chambers, it is found throughout the cytoplasm of the oocyte and nurse cells, with slight enrichment at the oocyte cortex.</text>
</comment>
<comment type="similarity">
    <text evidence="6">Belongs to the DNA2/NAM7 helicase family. SDE3 subfamily.</text>
</comment>
<feature type="chain" id="PRO_0000080708" description="Probable RNA helicase armi">
    <location>
        <begin position="1"/>
        <end position="1188"/>
    </location>
</feature>
<feature type="short sequence motif" description="DEAG box">
    <location>
        <begin position="862"/>
        <end position="865"/>
    </location>
</feature>
<feature type="binding site" evidence="1">
    <location>
        <begin position="723"/>
        <end position="730"/>
    </location>
    <ligand>
        <name>ATP</name>
        <dbReference type="ChEBI" id="CHEBI:30616"/>
    </ligand>
</feature>
<feature type="sequence conflict" description="In Ref. 1; AAT12000." evidence="6" ref="1">
    <original>T</original>
    <variation>K</variation>
    <location>
        <position position="522"/>
    </location>
</feature>
<feature type="sequence conflict" description="In Ref. 1; AAT12000." evidence="6" ref="1">
    <original>I</original>
    <variation>V</variation>
    <location>
        <position position="527"/>
    </location>
</feature>
<feature type="sequence conflict" description="In Ref. 1; AAT12000." evidence="6" ref="1">
    <original>S</original>
    <variation>L</variation>
    <location>
        <position position="905"/>
    </location>
</feature>